<accession>Q8BXJ9</accession>
<accession>A2AQ55</accession>
<name>TMM62_MOUSE</name>
<sequence>MARMLAVRVVAGLAAAAVAALLLEHYGLAGPTTPLPKPRGSQRPHPAPGSEANNIFWGLQISDIHLSRFQDPGRALALEKFCSETIDIIQPALVLATGDLTDAKTKEHLGSRQHEVEWQTYQRILKKTRVMEKTKWLDIKGNHDAYNIPSLESIANYYRKYSAVRKDGAFHHIHSTPFGNYSFISVDATQRPGPKRPYNFFGILDEKQMEELVEFSKKSSQSNQTIWFGHFTTSTIMSPSPGIRTVMGSATAYLCGHLHTLGGLMPVLHTRHFTGTLELEVGDWKDNRRYRIFAFDHDLFSFADVTFDKWPVVLITNPKSLLYSCAKHEPLERLFHSTHIRVLAFSLSPITSVTVKIDGGDIGQASHLSGPIFILKWNPRNYSNGTHTIEVFVQDSAGRSRTAHHIFSAQEDAHLTFDPLASFILLTDHYIVARVLFVLIVLIQLTTLITFRYLAYPELKEPLGFANMTTFSLHILSKINISYYSVLLLTLYTVLGPWFVGEIIDGKLGCCFSFGIFVDGHFLQGGLTFINGIIQLVFFNIPLMAYVCWSLLHRCFGHSFRSHLHQGKYWKIIPVYLLILLLYIWQVYSCYFLHVTYGSLAFTFSPLRTWLTLLTPVLIYRVWTLNSTELGIFMVQLKSHLSS</sequence>
<comment type="subcellular location">
    <subcellularLocation>
        <location evidence="2">Membrane</location>
        <topology evidence="2">Multi-pass membrane protein</topology>
    </subcellularLocation>
</comment>
<protein>
    <recommendedName>
        <fullName>Transmembrane protein 62</fullName>
    </recommendedName>
</protein>
<keyword id="KW-0325">Glycoprotein</keyword>
<keyword id="KW-0472">Membrane</keyword>
<keyword id="KW-1185">Reference proteome</keyword>
<keyword id="KW-0812">Transmembrane</keyword>
<keyword id="KW-1133">Transmembrane helix</keyword>
<proteinExistence type="evidence at transcript level"/>
<gene>
    <name type="primary">Tmem62</name>
</gene>
<evidence type="ECO:0000255" key="1"/>
<evidence type="ECO:0000305" key="2"/>
<dbReference type="EMBL" id="AK046793">
    <property type="protein sequence ID" value="BAC32871.1"/>
    <property type="molecule type" value="mRNA"/>
</dbReference>
<dbReference type="EMBL" id="AL844548">
    <property type="status" value="NOT_ANNOTATED_CDS"/>
    <property type="molecule type" value="Genomic_DNA"/>
</dbReference>
<dbReference type="EMBL" id="BC070410">
    <property type="protein sequence ID" value="AAH70410.1"/>
    <property type="molecule type" value="mRNA"/>
</dbReference>
<dbReference type="CCDS" id="CCDS16629.1"/>
<dbReference type="RefSeq" id="NP_780494.1">
    <property type="nucleotide sequence ID" value="NM_175285.4"/>
</dbReference>
<dbReference type="BioGRID" id="220549">
    <property type="interactions" value="1"/>
</dbReference>
<dbReference type="FunCoup" id="Q8BXJ9">
    <property type="interactions" value="71"/>
</dbReference>
<dbReference type="STRING" id="10090.ENSMUSP00000064310"/>
<dbReference type="GlyConnect" id="2796">
    <property type="glycosylation" value="2 N-Linked glycans (1 site)"/>
</dbReference>
<dbReference type="GlyCosmos" id="Q8BXJ9">
    <property type="glycosylation" value="2 sites, 2 glycans"/>
</dbReference>
<dbReference type="GlyGen" id="Q8BXJ9">
    <property type="glycosylation" value="5 sites, 5 N-linked glycans (4 sites)"/>
</dbReference>
<dbReference type="iPTMnet" id="Q8BXJ9"/>
<dbReference type="PhosphoSitePlus" id="Q8BXJ9"/>
<dbReference type="PaxDb" id="10090-ENSMUSP00000064310"/>
<dbReference type="PeptideAtlas" id="Q8BXJ9"/>
<dbReference type="ProteomicsDB" id="259037"/>
<dbReference type="Antibodypedia" id="54904">
    <property type="antibodies" value="17 antibodies from 8 providers"/>
</dbReference>
<dbReference type="DNASU" id="96957"/>
<dbReference type="Ensembl" id="ENSMUST00000067582.14">
    <property type="protein sequence ID" value="ENSMUSP00000064310.8"/>
    <property type="gene ID" value="ENSMUSG00000054484.15"/>
</dbReference>
<dbReference type="GeneID" id="96957"/>
<dbReference type="KEGG" id="mmu:96957"/>
<dbReference type="UCSC" id="uc008lxe.1">
    <property type="organism name" value="mouse"/>
</dbReference>
<dbReference type="AGR" id="MGI:2139461"/>
<dbReference type="CTD" id="80021"/>
<dbReference type="MGI" id="MGI:2139461">
    <property type="gene designation" value="Tmem62"/>
</dbReference>
<dbReference type="VEuPathDB" id="HostDB:ENSMUSG00000054484"/>
<dbReference type="eggNOG" id="ENOG502QTBN">
    <property type="taxonomic scope" value="Eukaryota"/>
</dbReference>
<dbReference type="GeneTree" id="ENSGT00390000016216"/>
<dbReference type="InParanoid" id="Q8BXJ9"/>
<dbReference type="OMA" id="VEWQTYH"/>
<dbReference type="OrthoDB" id="27234at2759"/>
<dbReference type="PhylomeDB" id="Q8BXJ9"/>
<dbReference type="TreeFam" id="TF323442"/>
<dbReference type="BioGRID-ORCS" id="96957">
    <property type="hits" value="1 hit in 77 CRISPR screens"/>
</dbReference>
<dbReference type="ChiTaRS" id="Tmem62">
    <property type="organism name" value="mouse"/>
</dbReference>
<dbReference type="PRO" id="PR:Q8BXJ9"/>
<dbReference type="Proteomes" id="UP000000589">
    <property type="component" value="Chromosome 2"/>
</dbReference>
<dbReference type="RNAct" id="Q8BXJ9">
    <property type="molecule type" value="protein"/>
</dbReference>
<dbReference type="Bgee" id="ENSMUSG00000054484">
    <property type="expression patterns" value="Expressed in cerebellar vermis and 220 other cell types or tissues"/>
</dbReference>
<dbReference type="ExpressionAtlas" id="Q8BXJ9">
    <property type="expression patterns" value="baseline and differential"/>
</dbReference>
<dbReference type="GO" id="GO:0016020">
    <property type="term" value="C:membrane"/>
    <property type="evidence" value="ECO:0007669"/>
    <property type="project" value="UniProtKB-SubCell"/>
</dbReference>
<dbReference type="GO" id="GO:0016787">
    <property type="term" value="F:hydrolase activity"/>
    <property type="evidence" value="ECO:0007669"/>
    <property type="project" value="InterPro"/>
</dbReference>
<dbReference type="CDD" id="cd07401">
    <property type="entry name" value="MPP_TMEM62_N"/>
    <property type="match status" value="1"/>
</dbReference>
<dbReference type="Gene3D" id="3.60.21.10">
    <property type="match status" value="1"/>
</dbReference>
<dbReference type="InterPro" id="IPR004843">
    <property type="entry name" value="Calcineurin-like_PHP_ApaH"/>
</dbReference>
<dbReference type="InterPro" id="IPR056229">
    <property type="entry name" value="Ig_TMM62"/>
</dbReference>
<dbReference type="InterPro" id="IPR029052">
    <property type="entry name" value="Metallo-depent_PP-like"/>
</dbReference>
<dbReference type="InterPro" id="IPR041871">
    <property type="entry name" value="MPP_TMEM62"/>
</dbReference>
<dbReference type="InterPro" id="IPR056230">
    <property type="entry name" value="TMEM62_C"/>
</dbReference>
<dbReference type="PANTHER" id="PTHR14795">
    <property type="entry name" value="HELICASE RELATED"/>
    <property type="match status" value="1"/>
</dbReference>
<dbReference type="PANTHER" id="PTHR14795:SF0">
    <property type="entry name" value="TRANSMEMBRANE PROTEIN 62"/>
    <property type="match status" value="1"/>
</dbReference>
<dbReference type="Pfam" id="PF24384">
    <property type="entry name" value="Ig_TMM62"/>
    <property type="match status" value="1"/>
</dbReference>
<dbReference type="Pfam" id="PF00149">
    <property type="entry name" value="Metallophos"/>
    <property type="match status" value="1"/>
</dbReference>
<dbReference type="Pfam" id="PF24394">
    <property type="entry name" value="TMEM62_C"/>
    <property type="match status" value="1"/>
</dbReference>
<dbReference type="SUPFAM" id="SSF56300">
    <property type="entry name" value="Metallo-dependent phosphatases"/>
    <property type="match status" value="1"/>
</dbReference>
<organism>
    <name type="scientific">Mus musculus</name>
    <name type="common">Mouse</name>
    <dbReference type="NCBI Taxonomy" id="10090"/>
    <lineage>
        <taxon>Eukaryota</taxon>
        <taxon>Metazoa</taxon>
        <taxon>Chordata</taxon>
        <taxon>Craniata</taxon>
        <taxon>Vertebrata</taxon>
        <taxon>Euteleostomi</taxon>
        <taxon>Mammalia</taxon>
        <taxon>Eutheria</taxon>
        <taxon>Euarchontoglires</taxon>
        <taxon>Glires</taxon>
        <taxon>Rodentia</taxon>
        <taxon>Myomorpha</taxon>
        <taxon>Muroidea</taxon>
        <taxon>Muridae</taxon>
        <taxon>Murinae</taxon>
        <taxon>Mus</taxon>
        <taxon>Mus</taxon>
    </lineage>
</organism>
<reference key="1">
    <citation type="journal article" date="2005" name="Science">
        <title>The transcriptional landscape of the mammalian genome.</title>
        <authorList>
            <person name="Carninci P."/>
            <person name="Kasukawa T."/>
            <person name="Katayama S."/>
            <person name="Gough J."/>
            <person name="Frith M.C."/>
            <person name="Maeda N."/>
            <person name="Oyama R."/>
            <person name="Ravasi T."/>
            <person name="Lenhard B."/>
            <person name="Wells C."/>
            <person name="Kodzius R."/>
            <person name="Shimokawa K."/>
            <person name="Bajic V.B."/>
            <person name="Brenner S.E."/>
            <person name="Batalov S."/>
            <person name="Forrest A.R."/>
            <person name="Zavolan M."/>
            <person name="Davis M.J."/>
            <person name="Wilming L.G."/>
            <person name="Aidinis V."/>
            <person name="Allen J.E."/>
            <person name="Ambesi-Impiombato A."/>
            <person name="Apweiler R."/>
            <person name="Aturaliya R.N."/>
            <person name="Bailey T.L."/>
            <person name="Bansal M."/>
            <person name="Baxter L."/>
            <person name="Beisel K.W."/>
            <person name="Bersano T."/>
            <person name="Bono H."/>
            <person name="Chalk A.M."/>
            <person name="Chiu K.P."/>
            <person name="Choudhary V."/>
            <person name="Christoffels A."/>
            <person name="Clutterbuck D.R."/>
            <person name="Crowe M.L."/>
            <person name="Dalla E."/>
            <person name="Dalrymple B.P."/>
            <person name="de Bono B."/>
            <person name="Della Gatta G."/>
            <person name="di Bernardo D."/>
            <person name="Down T."/>
            <person name="Engstrom P."/>
            <person name="Fagiolini M."/>
            <person name="Faulkner G."/>
            <person name="Fletcher C.F."/>
            <person name="Fukushima T."/>
            <person name="Furuno M."/>
            <person name="Futaki S."/>
            <person name="Gariboldi M."/>
            <person name="Georgii-Hemming P."/>
            <person name="Gingeras T.R."/>
            <person name="Gojobori T."/>
            <person name="Green R.E."/>
            <person name="Gustincich S."/>
            <person name="Harbers M."/>
            <person name="Hayashi Y."/>
            <person name="Hensch T.K."/>
            <person name="Hirokawa N."/>
            <person name="Hill D."/>
            <person name="Huminiecki L."/>
            <person name="Iacono M."/>
            <person name="Ikeo K."/>
            <person name="Iwama A."/>
            <person name="Ishikawa T."/>
            <person name="Jakt M."/>
            <person name="Kanapin A."/>
            <person name="Katoh M."/>
            <person name="Kawasawa Y."/>
            <person name="Kelso J."/>
            <person name="Kitamura H."/>
            <person name="Kitano H."/>
            <person name="Kollias G."/>
            <person name="Krishnan S.P."/>
            <person name="Kruger A."/>
            <person name="Kummerfeld S.K."/>
            <person name="Kurochkin I.V."/>
            <person name="Lareau L.F."/>
            <person name="Lazarevic D."/>
            <person name="Lipovich L."/>
            <person name="Liu J."/>
            <person name="Liuni S."/>
            <person name="McWilliam S."/>
            <person name="Madan Babu M."/>
            <person name="Madera M."/>
            <person name="Marchionni L."/>
            <person name="Matsuda H."/>
            <person name="Matsuzawa S."/>
            <person name="Miki H."/>
            <person name="Mignone F."/>
            <person name="Miyake S."/>
            <person name="Morris K."/>
            <person name="Mottagui-Tabar S."/>
            <person name="Mulder N."/>
            <person name="Nakano N."/>
            <person name="Nakauchi H."/>
            <person name="Ng P."/>
            <person name="Nilsson R."/>
            <person name="Nishiguchi S."/>
            <person name="Nishikawa S."/>
            <person name="Nori F."/>
            <person name="Ohara O."/>
            <person name="Okazaki Y."/>
            <person name="Orlando V."/>
            <person name="Pang K.C."/>
            <person name="Pavan W.J."/>
            <person name="Pavesi G."/>
            <person name="Pesole G."/>
            <person name="Petrovsky N."/>
            <person name="Piazza S."/>
            <person name="Reed J."/>
            <person name="Reid J.F."/>
            <person name="Ring B.Z."/>
            <person name="Ringwald M."/>
            <person name="Rost B."/>
            <person name="Ruan Y."/>
            <person name="Salzberg S.L."/>
            <person name="Sandelin A."/>
            <person name="Schneider C."/>
            <person name="Schoenbach C."/>
            <person name="Sekiguchi K."/>
            <person name="Semple C.A."/>
            <person name="Seno S."/>
            <person name="Sessa L."/>
            <person name="Sheng Y."/>
            <person name="Shibata Y."/>
            <person name="Shimada H."/>
            <person name="Shimada K."/>
            <person name="Silva D."/>
            <person name="Sinclair B."/>
            <person name="Sperling S."/>
            <person name="Stupka E."/>
            <person name="Sugiura K."/>
            <person name="Sultana R."/>
            <person name="Takenaka Y."/>
            <person name="Taki K."/>
            <person name="Tammoja K."/>
            <person name="Tan S.L."/>
            <person name="Tang S."/>
            <person name="Taylor M.S."/>
            <person name="Tegner J."/>
            <person name="Teichmann S.A."/>
            <person name="Ueda H.R."/>
            <person name="van Nimwegen E."/>
            <person name="Verardo R."/>
            <person name="Wei C.L."/>
            <person name="Yagi K."/>
            <person name="Yamanishi H."/>
            <person name="Zabarovsky E."/>
            <person name="Zhu S."/>
            <person name="Zimmer A."/>
            <person name="Hide W."/>
            <person name="Bult C."/>
            <person name="Grimmond S.M."/>
            <person name="Teasdale R.D."/>
            <person name="Liu E.T."/>
            <person name="Brusic V."/>
            <person name="Quackenbush J."/>
            <person name="Wahlestedt C."/>
            <person name="Mattick J.S."/>
            <person name="Hume D.A."/>
            <person name="Kai C."/>
            <person name="Sasaki D."/>
            <person name="Tomaru Y."/>
            <person name="Fukuda S."/>
            <person name="Kanamori-Katayama M."/>
            <person name="Suzuki M."/>
            <person name="Aoki J."/>
            <person name="Arakawa T."/>
            <person name="Iida J."/>
            <person name="Imamura K."/>
            <person name="Itoh M."/>
            <person name="Kato T."/>
            <person name="Kawaji H."/>
            <person name="Kawagashira N."/>
            <person name="Kawashima T."/>
            <person name="Kojima M."/>
            <person name="Kondo S."/>
            <person name="Konno H."/>
            <person name="Nakano K."/>
            <person name="Ninomiya N."/>
            <person name="Nishio T."/>
            <person name="Okada M."/>
            <person name="Plessy C."/>
            <person name="Shibata K."/>
            <person name="Shiraki T."/>
            <person name="Suzuki S."/>
            <person name="Tagami M."/>
            <person name="Waki K."/>
            <person name="Watahiki A."/>
            <person name="Okamura-Oho Y."/>
            <person name="Suzuki H."/>
            <person name="Kawai J."/>
            <person name="Hayashizaki Y."/>
        </authorList>
    </citation>
    <scope>NUCLEOTIDE SEQUENCE [LARGE SCALE MRNA]</scope>
    <source>
        <strain>C57BL/6J</strain>
        <tissue>Medulla oblongata</tissue>
    </source>
</reference>
<reference key="2">
    <citation type="journal article" date="2009" name="PLoS Biol.">
        <title>Lineage-specific biology revealed by a finished genome assembly of the mouse.</title>
        <authorList>
            <person name="Church D.M."/>
            <person name="Goodstadt L."/>
            <person name="Hillier L.W."/>
            <person name="Zody M.C."/>
            <person name="Goldstein S."/>
            <person name="She X."/>
            <person name="Bult C.J."/>
            <person name="Agarwala R."/>
            <person name="Cherry J.L."/>
            <person name="DiCuccio M."/>
            <person name="Hlavina W."/>
            <person name="Kapustin Y."/>
            <person name="Meric P."/>
            <person name="Maglott D."/>
            <person name="Birtle Z."/>
            <person name="Marques A.C."/>
            <person name="Graves T."/>
            <person name="Zhou S."/>
            <person name="Teague B."/>
            <person name="Potamousis K."/>
            <person name="Churas C."/>
            <person name="Place M."/>
            <person name="Herschleb J."/>
            <person name="Runnheim R."/>
            <person name="Forrest D."/>
            <person name="Amos-Landgraf J."/>
            <person name="Schwartz D.C."/>
            <person name="Cheng Z."/>
            <person name="Lindblad-Toh K."/>
            <person name="Eichler E.E."/>
            <person name="Ponting C.P."/>
        </authorList>
    </citation>
    <scope>NUCLEOTIDE SEQUENCE [LARGE SCALE GENOMIC DNA]</scope>
    <source>
        <strain>C57BL/6J</strain>
    </source>
</reference>
<reference key="3">
    <citation type="journal article" date="2004" name="Genome Res.">
        <title>The status, quality, and expansion of the NIH full-length cDNA project: the Mammalian Gene Collection (MGC).</title>
        <authorList>
            <consortium name="The MGC Project Team"/>
        </authorList>
    </citation>
    <scope>NUCLEOTIDE SEQUENCE [LARGE SCALE MRNA]</scope>
    <source>
        <strain>C57BL/6J</strain>
        <tissue>Brain</tissue>
    </source>
</reference>
<feature type="chain" id="PRO_0000254137" description="Transmembrane protein 62">
    <location>
        <begin position="1"/>
        <end position="643"/>
    </location>
</feature>
<feature type="transmembrane region" description="Helical" evidence="1">
    <location>
        <begin position="9"/>
        <end position="29"/>
    </location>
</feature>
<feature type="transmembrane region" description="Helical" evidence="1">
    <location>
        <begin position="431"/>
        <end position="451"/>
    </location>
</feature>
<feature type="transmembrane region" description="Helical" evidence="1">
    <location>
        <begin position="484"/>
        <end position="504"/>
    </location>
</feature>
<feature type="transmembrane region" description="Helical" evidence="1">
    <location>
        <begin position="532"/>
        <end position="552"/>
    </location>
</feature>
<feature type="transmembrane region" description="Helical" evidence="1">
    <location>
        <begin position="572"/>
        <end position="592"/>
    </location>
</feature>
<feature type="glycosylation site" description="N-linked (GlcNAc...) asparagine" evidence="1">
    <location>
        <position position="180"/>
    </location>
</feature>